<proteinExistence type="inferred from homology"/>
<protein>
    <recommendedName>
        <fullName evidence="1">Phosphoribosyl-AMP cyclohydrolase</fullName>
        <shortName evidence="1">PRA-CH</shortName>
        <ecNumber evidence="1">3.5.4.19</ecNumber>
    </recommendedName>
</protein>
<organism>
    <name type="scientific">Rhizobium etli (strain CIAT 652)</name>
    <dbReference type="NCBI Taxonomy" id="491916"/>
    <lineage>
        <taxon>Bacteria</taxon>
        <taxon>Pseudomonadati</taxon>
        <taxon>Pseudomonadota</taxon>
        <taxon>Alphaproteobacteria</taxon>
        <taxon>Hyphomicrobiales</taxon>
        <taxon>Rhizobiaceae</taxon>
        <taxon>Rhizobium/Agrobacterium group</taxon>
        <taxon>Rhizobium</taxon>
    </lineage>
</organism>
<feature type="chain" id="PRO_1000135363" description="Phosphoribosyl-AMP cyclohydrolase">
    <location>
        <begin position="1"/>
        <end position="150"/>
    </location>
</feature>
<feature type="binding site" evidence="1">
    <location>
        <position position="93"/>
    </location>
    <ligand>
        <name>Mg(2+)</name>
        <dbReference type="ChEBI" id="CHEBI:18420"/>
    </ligand>
</feature>
<feature type="binding site" evidence="1">
    <location>
        <position position="94"/>
    </location>
    <ligand>
        <name>Zn(2+)</name>
        <dbReference type="ChEBI" id="CHEBI:29105"/>
        <note>ligand shared between dimeric partners</note>
    </ligand>
</feature>
<feature type="binding site" evidence="1">
    <location>
        <position position="95"/>
    </location>
    <ligand>
        <name>Mg(2+)</name>
        <dbReference type="ChEBI" id="CHEBI:18420"/>
    </ligand>
</feature>
<feature type="binding site" evidence="1">
    <location>
        <position position="97"/>
    </location>
    <ligand>
        <name>Mg(2+)</name>
        <dbReference type="ChEBI" id="CHEBI:18420"/>
    </ligand>
</feature>
<feature type="binding site" evidence="1">
    <location>
        <position position="112"/>
    </location>
    <ligand>
        <name>Zn(2+)</name>
        <dbReference type="ChEBI" id="CHEBI:29105"/>
        <note>ligand shared between dimeric partners</note>
    </ligand>
</feature>
<feature type="binding site" evidence="1">
    <location>
        <position position="119"/>
    </location>
    <ligand>
        <name>Zn(2+)</name>
        <dbReference type="ChEBI" id="CHEBI:29105"/>
        <note>ligand shared between dimeric partners</note>
    </ligand>
</feature>
<evidence type="ECO:0000255" key="1">
    <source>
        <dbReference type="HAMAP-Rule" id="MF_01021"/>
    </source>
</evidence>
<dbReference type="EC" id="3.5.4.19" evidence="1"/>
<dbReference type="EMBL" id="CP001074">
    <property type="protein sequence ID" value="ACE91245.1"/>
    <property type="molecule type" value="Genomic_DNA"/>
</dbReference>
<dbReference type="SMR" id="B3PNV9"/>
<dbReference type="KEGG" id="rec:RHECIAT_CH0002290"/>
<dbReference type="eggNOG" id="COG0139">
    <property type="taxonomic scope" value="Bacteria"/>
</dbReference>
<dbReference type="HOGENOM" id="CLU_048577_5_0_5"/>
<dbReference type="UniPathway" id="UPA00031">
    <property type="reaction ID" value="UER00008"/>
</dbReference>
<dbReference type="Proteomes" id="UP000008817">
    <property type="component" value="Chromosome"/>
</dbReference>
<dbReference type="GO" id="GO:0005737">
    <property type="term" value="C:cytoplasm"/>
    <property type="evidence" value="ECO:0007669"/>
    <property type="project" value="UniProtKB-SubCell"/>
</dbReference>
<dbReference type="GO" id="GO:0000287">
    <property type="term" value="F:magnesium ion binding"/>
    <property type="evidence" value="ECO:0007669"/>
    <property type="project" value="UniProtKB-UniRule"/>
</dbReference>
<dbReference type="GO" id="GO:0004635">
    <property type="term" value="F:phosphoribosyl-AMP cyclohydrolase activity"/>
    <property type="evidence" value="ECO:0007669"/>
    <property type="project" value="UniProtKB-UniRule"/>
</dbReference>
<dbReference type="GO" id="GO:0008270">
    <property type="term" value="F:zinc ion binding"/>
    <property type="evidence" value="ECO:0007669"/>
    <property type="project" value="UniProtKB-UniRule"/>
</dbReference>
<dbReference type="GO" id="GO:0000105">
    <property type="term" value="P:L-histidine biosynthetic process"/>
    <property type="evidence" value="ECO:0007669"/>
    <property type="project" value="UniProtKB-UniRule"/>
</dbReference>
<dbReference type="FunFam" id="3.10.20.810:FF:000001">
    <property type="entry name" value="Histidine biosynthesis bifunctional protein HisIE"/>
    <property type="match status" value="1"/>
</dbReference>
<dbReference type="Gene3D" id="4.10.80.70">
    <property type="match status" value="1"/>
</dbReference>
<dbReference type="Gene3D" id="3.10.20.810">
    <property type="entry name" value="Phosphoribosyl-AMP cyclohydrolase"/>
    <property type="match status" value="1"/>
</dbReference>
<dbReference type="HAMAP" id="MF_01021">
    <property type="entry name" value="HisI"/>
    <property type="match status" value="1"/>
</dbReference>
<dbReference type="InterPro" id="IPR026660">
    <property type="entry name" value="PRA-CH"/>
</dbReference>
<dbReference type="InterPro" id="IPR002496">
    <property type="entry name" value="PRib_AMP_CycHydrolase_dom"/>
</dbReference>
<dbReference type="InterPro" id="IPR038019">
    <property type="entry name" value="PRib_AMP_CycHydrolase_sf"/>
</dbReference>
<dbReference type="NCBIfam" id="NF000768">
    <property type="entry name" value="PRK00051.1"/>
    <property type="match status" value="1"/>
</dbReference>
<dbReference type="PANTHER" id="PTHR42945">
    <property type="entry name" value="HISTIDINE BIOSYNTHESIS BIFUNCTIONAL PROTEIN"/>
    <property type="match status" value="1"/>
</dbReference>
<dbReference type="PANTHER" id="PTHR42945:SF1">
    <property type="entry name" value="HISTIDINE BIOSYNTHESIS BIFUNCTIONAL PROTEIN HIS7"/>
    <property type="match status" value="1"/>
</dbReference>
<dbReference type="Pfam" id="PF01502">
    <property type="entry name" value="PRA-CH"/>
    <property type="match status" value="1"/>
</dbReference>
<dbReference type="SUPFAM" id="SSF141734">
    <property type="entry name" value="HisI-like"/>
    <property type="match status" value="1"/>
</dbReference>
<accession>B3PNV9</accession>
<sequence length="150" mass="16814">MSHLIFNQPSEDKSALEDAGDFTPRFDDRGLITAIVTDAGDGELLMVAHMNAQALALTIQTGTAHYFSRSRGKIWKKGETSGNLQTVKEIRTDCDQDAIWLKVEVAGHDATCHTGRRSCFYRTVTLREGKPMLDIIDDERHFDPQDIYGK</sequence>
<reference key="1">
    <citation type="journal article" date="2010" name="Appl. Environ. Microbiol.">
        <title>Conserved symbiotic plasmid DNA sequences in the multireplicon pangenomic structure of Rhizobium etli.</title>
        <authorList>
            <person name="Gonzalez V."/>
            <person name="Acosta J.L."/>
            <person name="Santamaria R.I."/>
            <person name="Bustos P."/>
            <person name="Fernandez J.L."/>
            <person name="Hernandez Gonzalez I.L."/>
            <person name="Diaz R."/>
            <person name="Flores M."/>
            <person name="Palacios R."/>
            <person name="Mora J."/>
            <person name="Davila G."/>
        </authorList>
    </citation>
    <scope>NUCLEOTIDE SEQUENCE [LARGE SCALE GENOMIC DNA]</scope>
    <source>
        <strain>CIAT 652</strain>
    </source>
</reference>
<name>HIS3_RHIE6</name>
<gene>
    <name evidence="1" type="primary">hisI</name>
    <name type="ordered locus">RHECIAT_CH0002290</name>
</gene>
<comment type="function">
    <text evidence="1">Catalyzes the hydrolysis of the adenine ring of phosphoribosyl-AMP.</text>
</comment>
<comment type="catalytic activity">
    <reaction evidence="1">
        <text>1-(5-phospho-beta-D-ribosyl)-5'-AMP + H2O = 1-(5-phospho-beta-D-ribosyl)-5-[(5-phospho-beta-D-ribosylamino)methylideneamino]imidazole-4-carboxamide</text>
        <dbReference type="Rhea" id="RHEA:20049"/>
        <dbReference type="ChEBI" id="CHEBI:15377"/>
        <dbReference type="ChEBI" id="CHEBI:58435"/>
        <dbReference type="ChEBI" id="CHEBI:59457"/>
        <dbReference type="EC" id="3.5.4.19"/>
    </reaction>
</comment>
<comment type="cofactor">
    <cofactor evidence="1">
        <name>Mg(2+)</name>
        <dbReference type="ChEBI" id="CHEBI:18420"/>
    </cofactor>
    <text evidence="1">Binds 1 Mg(2+) ion per subunit.</text>
</comment>
<comment type="cofactor">
    <cofactor evidence="1">
        <name>Zn(2+)</name>
        <dbReference type="ChEBI" id="CHEBI:29105"/>
    </cofactor>
    <text evidence="1">Binds 1 zinc ion per subunit.</text>
</comment>
<comment type="pathway">
    <text evidence="1">Amino-acid biosynthesis; L-histidine biosynthesis; L-histidine from 5-phospho-alpha-D-ribose 1-diphosphate: step 3/9.</text>
</comment>
<comment type="subunit">
    <text evidence="1">Homodimer.</text>
</comment>
<comment type="subcellular location">
    <subcellularLocation>
        <location evidence="1">Cytoplasm</location>
    </subcellularLocation>
</comment>
<comment type="similarity">
    <text evidence="1">Belongs to the PRA-CH family.</text>
</comment>
<keyword id="KW-0028">Amino-acid biosynthesis</keyword>
<keyword id="KW-0963">Cytoplasm</keyword>
<keyword id="KW-0368">Histidine biosynthesis</keyword>
<keyword id="KW-0378">Hydrolase</keyword>
<keyword id="KW-0460">Magnesium</keyword>
<keyword id="KW-0479">Metal-binding</keyword>
<keyword id="KW-0862">Zinc</keyword>